<sequence>MLLSDRDILAAQSAGHISLDPWTPEMVQPASIDVRLDRYFRLFNNHAYTYVDPAENQGALTEQFEVAPDEPWILHPGEFALGSTWEYVKLDPSIAARLEGKSSLGRLGILTHSTAGFIDPGFEGHITLELSNVSTLPVKLWPGMKIGQMCFFQLSSPAEHPYGSKGTGSHYQGQRGPTPSRSYENFYRAHIDD</sequence>
<comment type="function">
    <text evidence="1">Bifunctional enzyme that catalyzes both the deamination of dCTP to dUTP and the hydrolysis of dUTP to dUMP without releasing the toxic dUTP intermediate.</text>
</comment>
<comment type="catalytic activity">
    <reaction evidence="1">
        <text>dCTP + 2 H2O = dUMP + NH4(+) + diphosphate</text>
        <dbReference type="Rhea" id="RHEA:19205"/>
        <dbReference type="ChEBI" id="CHEBI:15377"/>
        <dbReference type="ChEBI" id="CHEBI:28938"/>
        <dbReference type="ChEBI" id="CHEBI:33019"/>
        <dbReference type="ChEBI" id="CHEBI:61481"/>
        <dbReference type="ChEBI" id="CHEBI:246422"/>
        <dbReference type="EC" id="3.5.4.30"/>
    </reaction>
</comment>
<comment type="pathway">
    <text evidence="1">Pyrimidine metabolism; dUMP biosynthesis; dUMP from dCTP: step 1/1.</text>
</comment>
<comment type="subunit">
    <text evidence="1">Homotrimer.</text>
</comment>
<comment type="similarity">
    <text evidence="1">Belongs to the dCTP deaminase family.</text>
</comment>
<dbReference type="EC" id="3.5.4.30" evidence="1"/>
<dbReference type="EMBL" id="CP001095">
    <property type="protein sequence ID" value="ACJ53519.1"/>
    <property type="molecule type" value="Genomic_DNA"/>
</dbReference>
<dbReference type="EMBL" id="AP010889">
    <property type="protein sequence ID" value="BAJ70113.1"/>
    <property type="molecule type" value="Genomic_DNA"/>
</dbReference>
<dbReference type="RefSeq" id="WP_007051821.1">
    <property type="nucleotide sequence ID" value="NZ_JDTT01000013.1"/>
</dbReference>
<dbReference type="SMR" id="B7GPC4"/>
<dbReference type="GeneID" id="69579108"/>
<dbReference type="KEGG" id="bln:Blon_2465"/>
<dbReference type="KEGG" id="blon:BLIJ_2536"/>
<dbReference type="PATRIC" id="fig|391904.8.peg.2539"/>
<dbReference type="HOGENOM" id="CLU_087476_2_0_11"/>
<dbReference type="UniPathway" id="UPA00610">
    <property type="reaction ID" value="UER00667"/>
</dbReference>
<dbReference type="Proteomes" id="UP000001360">
    <property type="component" value="Chromosome"/>
</dbReference>
<dbReference type="GO" id="GO:0033973">
    <property type="term" value="F:dCTP deaminase (dUMP-forming) activity"/>
    <property type="evidence" value="ECO:0007669"/>
    <property type="project" value="UniProtKB-UniRule"/>
</dbReference>
<dbReference type="GO" id="GO:0008829">
    <property type="term" value="F:dCTP deaminase activity"/>
    <property type="evidence" value="ECO:0007669"/>
    <property type="project" value="InterPro"/>
</dbReference>
<dbReference type="GO" id="GO:0000166">
    <property type="term" value="F:nucleotide binding"/>
    <property type="evidence" value="ECO:0007669"/>
    <property type="project" value="UniProtKB-KW"/>
</dbReference>
<dbReference type="GO" id="GO:0006226">
    <property type="term" value="P:dUMP biosynthetic process"/>
    <property type="evidence" value="ECO:0007669"/>
    <property type="project" value="UniProtKB-UniRule"/>
</dbReference>
<dbReference type="GO" id="GO:0006229">
    <property type="term" value="P:dUTP biosynthetic process"/>
    <property type="evidence" value="ECO:0007669"/>
    <property type="project" value="InterPro"/>
</dbReference>
<dbReference type="GO" id="GO:0015949">
    <property type="term" value="P:nucleobase-containing small molecule interconversion"/>
    <property type="evidence" value="ECO:0007669"/>
    <property type="project" value="TreeGrafter"/>
</dbReference>
<dbReference type="CDD" id="cd07557">
    <property type="entry name" value="trimeric_dUTPase"/>
    <property type="match status" value="1"/>
</dbReference>
<dbReference type="FunFam" id="2.70.40.10:FF:000005">
    <property type="entry name" value="dCTP deaminase, dUMP-forming"/>
    <property type="match status" value="1"/>
</dbReference>
<dbReference type="Gene3D" id="2.70.40.10">
    <property type="match status" value="1"/>
</dbReference>
<dbReference type="HAMAP" id="MF_00146">
    <property type="entry name" value="dCTP_deaminase"/>
    <property type="match status" value="1"/>
</dbReference>
<dbReference type="InterPro" id="IPR011962">
    <property type="entry name" value="dCTP_deaminase"/>
</dbReference>
<dbReference type="InterPro" id="IPR036157">
    <property type="entry name" value="dUTPase-like_sf"/>
</dbReference>
<dbReference type="InterPro" id="IPR033704">
    <property type="entry name" value="dUTPase_trimeric"/>
</dbReference>
<dbReference type="NCBIfam" id="TIGR02274">
    <property type="entry name" value="dCTP_deam"/>
    <property type="match status" value="1"/>
</dbReference>
<dbReference type="PANTHER" id="PTHR42680">
    <property type="entry name" value="DCTP DEAMINASE"/>
    <property type="match status" value="1"/>
</dbReference>
<dbReference type="PANTHER" id="PTHR42680:SF3">
    <property type="entry name" value="DCTP DEAMINASE"/>
    <property type="match status" value="1"/>
</dbReference>
<dbReference type="Pfam" id="PF22769">
    <property type="entry name" value="DCD"/>
    <property type="match status" value="1"/>
</dbReference>
<dbReference type="SUPFAM" id="SSF51283">
    <property type="entry name" value="dUTPase-like"/>
    <property type="match status" value="1"/>
</dbReference>
<organism>
    <name type="scientific">Bifidobacterium longum subsp. infantis (strain ATCC 15697 / DSM 20088 / JCM 1222 / NCTC 11817 / S12)</name>
    <dbReference type="NCBI Taxonomy" id="391904"/>
    <lineage>
        <taxon>Bacteria</taxon>
        <taxon>Bacillati</taxon>
        <taxon>Actinomycetota</taxon>
        <taxon>Actinomycetes</taxon>
        <taxon>Bifidobacteriales</taxon>
        <taxon>Bifidobacteriaceae</taxon>
        <taxon>Bifidobacterium</taxon>
    </lineage>
</organism>
<accession>B7GPC4</accession>
<accession>E8MPN4</accession>
<protein>
    <recommendedName>
        <fullName evidence="1">dCTP deaminase, dUMP-forming</fullName>
        <ecNumber evidence="1">3.5.4.30</ecNumber>
    </recommendedName>
    <alternativeName>
        <fullName evidence="1">Bifunctional dCTP deaminase:dUTPase</fullName>
    </alternativeName>
    <alternativeName>
        <fullName evidence="1">DCD-DUT</fullName>
    </alternativeName>
</protein>
<reference key="1">
    <citation type="journal article" date="2008" name="Proc. Natl. Acad. Sci. U.S.A.">
        <title>The genome sequence of Bifidobacterium longum subsp. infantis reveals adaptations for milk utilization within the infant microbiome.</title>
        <authorList>
            <person name="Sela D.A."/>
            <person name="Chapman J."/>
            <person name="Adeuya A."/>
            <person name="Kim J.H."/>
            <person name="Chen F."/>
            <person name="Whitehead T.R."/>
            <person name="Lapidus A."/>
            <person name="Rokhsar D.S."/>
            <person name="Lebrilla C.B."/>
            <person name="German J.B."/>
            <person name="Price N.P."/>
            <person name="Richardson P.M."/>
            <person name="Mills D.A."/>
        </authorList>
    </citation>
    <scope>NUCLEOTIDE SEQUENCE [LARGE SCALE GENOMIC DNA]</scope>
    <source>
        <strain>ATCC 15697 / DSM 20088 / JCM 1222 / NCTC 11817 / S12</strain>
    </source>
</reference>
<reference key="2">
    <citation type="journal article" date="2011" name="Nature">
        <title>Bifidobacteria can protect from enteropathogenic infection through production of acetate.</title>
        <authorList>
            <person name="Fukuda S."/>
            <person name="Toh H."/>
            <person name="Hase K."/>
            <person name="Oshima K."/>
            <person name="Nakanishi Y."/>
            <person name="Yoshimura K."/>
            <person name="Tobe T."/>
            <person name="Clarke J.M."/>
            <person name="Topping D.L."/>
            <person name="Suzuki T."/>
            <person name="Taylor T.D."/>
            <person name="Itoh K."/>
            <person name="Kikuchi J."/>
            <person name="Morita H."/>
            <person name="Hattori M."/>
            <person name="Ohno H."/>
        </authorList>
    </citation>
    <scope>NUCLEOTIDE SEQUENCE [LARGE SCALE GENOMIC DNA]</scope>
    <source>
        <strain>ATCC 15697 / DSM 20088 / JCM 1222 / NCTC 11817 / S12</strain>
    </source>
</reference>
<evidence type="ECO:0000255" key="1">
    <source>
        <dbReference type="HAMAP-Rule" id="MF_00146"/>
    </source>
</evidence>
<evidence type="ECO:0000256" key="2">
    <source>
        <dbReference type="SAM" id="MobiDB-lite"/>
    </source>
</evidence>
<gene>
    <name evidence="1" type="primary">dcd</name>
    <name type="ordered locus">Blon_2465</name>
    <name type="ordered locus">BLIJ_2536</name>
</gene>
<proteinExistence type="inferred from homology"/>
<feature type="chain" id="PRO_1000123138" description="dCTP deaminase, dUMP-forming">
    <location>
        <begin position="1"/>
        <end position="193"/>
    </location>
</feature>
<feature type="region of interest" description="Disordered" evidence="2">
    <location>
        <begin position="162"/>
        <end position="184"/>
    </location>
</feature>
<feature type="compositionally biased region" description="Polar residues" evidence="2">
    <location>
        <begin position="167"/>
        <end position="183"/>
    </location>
</feature>
<feature type="active site" description="Proton donor/acceptor" evidence="1">
    <location>
        <position position="129"/>
    </location>
</feature>
<feature type="binding site" evidence="1">
    <location>
        <begin position="101"/>
        <end position="106"/>
    </location>
    <ligand>
        <name>dCTP</name>
        <dbReference type="ChEBI" id="CHEBI:61481"/>
    </ligand>
</feature>
<feature type="binding site" evidence="1">
    <location>
        <position position="119"/>
    </location>
    <ligand>
        <name>dCTP</name>
        <dbReference type="ChEBI" id="CHEBI:61481"/>
    </ligand>
</feature>
<feature type="binding site" evidence="1">
    <location>
        <begin position="127"/>
        <end position="129"/>
    </location>
    <ligand>
        <name>dCTP</name>
        <dbReference type="ChEBI" id="CHEBI:61481"/>
    </ligand>
</feature>
<feature type="binding site" evidence="1">
    <location>
        <position position="148"/>
    </location>
    <ligand>
        <name>dCTP</name>
        <dbReference type="ChEBI" id="CHEBI:61481"/>
    </ligand>
</feature>
<feature type="binding site" evidence="1">
    <location>
        <position position="162"/>
    </location>
    <ligand>
        <name>dCTP</name>
        <dbReference type="ChEBI" id="CHEBI:61481"/>
    </ligand>
</feature>
<feature type="binding site" evidence="1">
    <location>
        <position position="174"/>
    </location>
    <ligand>
        <name>dCTP</name>
        <dbReference type="ChEBI" id="CHEBI:61481"/>
    </ligand>
</feature>
<feature type="site" description="Important for bifunctional activity" evidence="1">
    <location>
        <begin position="116"/>
        <end position="117"/>
    </location>
</feature>
<keyword id="KW-0378">Hydrolase</keyword>
<keyword id="KW-0546">Nucleotide metabolism</keyword>
<keyword id="KW-0547">Nucleotide-binding</keyword>
<name>DCDB_BIFLS</name>